<name>RL15_GLAP5</name>
<feature type="chain" id="PRO_1000166298" description="Large ribosomal subunit protein uL15">
    <location>
        <begin position="1"/>
        <end position="144"/>
    </location>
</feature>
<feature type="region of interest" description="Disordered" evidence="2">
    <location>
        <begin position="1"/>
        <end position="53"/>
    </location>
</feature>
<feature type="compositionally biased region" description="Gly residues" evidence="2">
    <location>
        <begin position="21"/>
        <end position="31"/>
    </location>
</feature>
<sequence>MRLNSLSPAEGAKHSAKRLGRGIGSGLGKTGGRGHKGQKSRTGGGVRRGFEGGQMPLYRRLPKFGFTSLKALHVAEIRLSDLAKVDGNVVTLDALKAANVITKDILSAKVILSGKVEKAVVVKGLGVTKGAKAAIEAAGGSIEE</sequence>
<reference key="1">
    <citation type="journal article" date="2009" name="J. Bacteriol.">
        <title>Complete genome sequence of Haemophilus parasuis SH0165.</title>
        <authorList>
            <person name="Yue M."/>
            <person name="Yang F."/>
            <person name="Yang J."/>
            <person name="Bei W."/>
            <person name="Cai X."/>
            <person name="Chen L."/>
            <person name="Dong J."/>
            <person name="Zhou R."/>
            <person name="Jin M."/>
            <person name="Jin Q."/>
            <person name="Chen H."/>
        </authorList>
    </citation>
    <scope>NUCLEOTIDE SEQUENCE [LARGE SCALE GENOMIC DNA]</scope>
    <source>
        <strain>SH0165</strain>
    </source>
</reference>
<proteinExistence type="inferred from homology"/>
<evidence type="ECO:0000255" key="1">
    <source>
        <dbReference type="HAMAP-Rule" id="MF_01341"/>
    </source>
</evidence>
<evidence type="ECO:0000256" key="2">
    <source>
        <dbReference type="SAM" id="MobiDB-lite"/>
    </source>
</evidence>
<evidence type="ECO:0000305" key="3"/>
<protein>
    <recommendedName>
        <fullName evidence="1">Large ribosomal subunit protein uL15</fullName>
    </recommendedName>
    <alternativeName>
        <fullName evidence="3">50S ribosomal protein L15</fullName>
    </alternativeName>
</protein>
<dbReference type="EMBL" id="CP001321">
    <property type="protein sequence ID" value="ACL33004.1"/>
    <property type="molecule type" value="Genomic_DNA"/>
</dbReference>
<dbReference type="RefSeq" id="WP_010787026.1">
    <property type="nucleotide sequence ID" value="NC_011852.1"/>
</dbReference>
<dbReference type="SMR" id="B8F6Q2"/>
<dbReference type="STRING" id="557723.HAPS_1435"/>
<dbReference type="GeneID" id="66617800"/>
<dbReference type="KEGG" id="hap:HAPS_1435"/>
<dbReference type="HOGENOM" id="CLU_055188_4_2_6"/>
<dbReference type="Proteomes" id="UP000006743">
    <property type="component" value="Chromosome"/>
</dbReference>
<dbReference type="GO" id="GO:0022625">
    <property type="term" value="C:cytosolic large ribosomal subunit"/>
    <property type="evidence" value="ECO:0007669"/>
    <property type="project" value="TreeGrafter"/>
</dbReference>
<dbReference type="GO" id="GO:0019843">
    <property type="term" value="F:rRNA binding"/>
    <property type="evidence" value="ECO:0007669"/>
    <property type="project" value="UniProtKB-UniRule"/>
</dbReference>
<dbReference type="GO" id="GO:0003735">
    <property type="term" value="F:structural constituent of ribosome"/>
    <property type="evidence" value="ECO:0007669"/>
    <property type="project" value="InterPro"/>
</dbReference>
<dbReference type="GO" id="GO:0006412">
    <property type="term" value="P:translation"/>
    <property type="evidence" value="ECO:0007669"/>
    <property type="project" value="UniProtKB-UniRule"/>
</dbReference>
<dbReference type="Gene3D" id="3.100.10.10">
    <property type="match status" value="1"/>
</dbReference>
<dbReference type="HAMAP" id="MF_01341">
    <property type="entry name" value="Ribosomal_uL15"/>
    <property type="match status" value="1"/>
</dbReference>
<dbReference type="InterPro" id="IPR030878">
    <property type="entry name" value="Ribosomal_uL15"/>
</dbReference>
<dbReference type="InterPro" id="IPR021131">
    <property type="entry name" value="Ribosomal_uL15/eL18"/>
</dbReference>
<dbReference type="InterPro" id="IPR036227">
    <property type="entry name" value="Ribosomal_uL15/eL18_sf"/>
</dbReference>
<dbReference type="InterPro" id="IPR005749">
    <property type="entry name" value="Ribosomal_uL15_bac-type"/>
</dbReference>
<dbReference type="InterPro" id="IPR001196">
    <property type="entry name" value="Ribosomal_uL15_CS"/>
</dbReference>
<dbReference type="NCBIfam" id="TIGR01071">
    <property type="entry name" value="rplO_bact"/>
    <property type="match status" value="1"/>
</dbReference>
<dbReference type="PANTHER" id="PTHR12934">
    <property type="entry name" value="50S RIBOSOMAL PROTEIN L15"/>
    <property type="match status" value="1"/>
</dbReference>
<dbReference type="PANTHER" id="PTHR12934:SF11">
    <property type="entry name" value="LARGE RIBOSOMAL SUBUNIT PROTEIN UL15M"/>
    <property type="match status" value="1"/>
</dbReference>
<dbReference type="Pfam" id="PF00828">
    <property type="entry name" value="Ribosomal_L27A"/>
    <property type="match status" value="1"/>
</dbReference>
<dbReference type="SUPFAM" id="SSF52080">
    <property type="entry name" value="Ribosomal proteins L15p and L18e"/>
    <property type="match status" value="1"/>
</dbReference>
<dbReference type="PROSITE" id="PS00475">
    <property type="entry name" value="RIBOSOMAL_L15"/>
    <property type="match status" value="1"/>
</dbReference>
<organism>
    <name type="scientific">Glaesserella parasuis serovar 5 (strain SH0165)</name>
    <name type="common">Haemophilus parasuis</name>
    <dbReference type="NCBI Taxonomy" id="557723"/>
    <lineage>
        <taxon>Bacteria</taxon>
        <taxon>Pseudomonadati</taxon>
        <taxon>Pseudomonadota</taxon>
        <taxon>Gammaproteobacteria</taxon>
        <taxon>Pasteurellales</taxon>
        <taxon>Pasteurellaceae</taxon>
        <taxon>Glaesserella</taxon>
    </lineage>
</organism>
<accession>B8F6Q2</accession>
<gene>
    <name evidence="1" type="primary">rplO</name>
    <name type="ordered locus">HAPS_1435</name>
</gene>
<keyword id="KW-1185">Reference proteome</keyword>
<keyword id="KW-0687">Ribonucleoprotein</keyword>
<keyword id="KW-0689">Ribosomal protein</keyword>
<keyword id="KW-0694">RNA-binding</keyword>
<keyword id="KW-0699">rRNA-binding</keyword>
<comment type="function">
    <text evidence="1">Binds to the 23S rRNA.</text>
</comment>
<comment type="subunit">
    <text evidence="1">Part of the 50S ribosomal subunit.</text>
</comment>
<comment type="similarity">
    <text evidence="1">Belongs to the universal ribosomal protein uL15 family.</text>
</comment>